<sequence>MVSNLLKVVLAIETSCDETAVAVVRSDKQVLSHKVLSQKEHVVYGGVVPEIASRAHINYLYDLTSQSIEESGCDLADIDAIAVTSGPGLIGGLIIGVMMAKAISSVTNKPIIEVNHLEAHTLLIRMFHDIDFPFLVLIISGGHCQFLIVHDVGCYQRLGSSLDDSLGEVFDKVARMLNLGYPGGPIIEKKSIMGDSKSFFLPRALINRFGCDFSFSGIKTAVRNIVVNQKYIDNDFICNISASFQDCIGDILVNRITNAIHMSQAINCKINKLVVTGGVAANHLLRNRISICVKDNNFEVLYPPTELCTDNGIMVGWAGIENLSKGYVSNLDFVPKARWPLESIKRSS</sequence>
<organism>
    <name type="scientific">Ehrlichia ruminantium (strain Gardel)</name>
    <dbReference type="NCBI Taxonomy" id="302409"/>
    <lineage>
        <taxon>Bacteria</taxon>
        <taxon>Pseudomonadati</taxon>
        <taxon>Pseudomonadota</taxon>
        <taxon>Alphaproteobacteria</taxon>
        <taxon>Rickettsiales</taxon>
        <taxon>Anaplasmataceae</taxon>
        <taxon>Ehrlichia</taxon>
    </lineage>
</organism>
<accession>Q5FGU3</accession>
<evidence type="ECO:0000255" key="1">
    <source>
        <dbReference type="HAMAP-Rule" id="MF_01445"/>
    </source>
</evidence>
<proteinExistence type="inferred from homology"/>
<keyword id="KW-0012">Acyltransferase</keyword>
<keyword id="KW-0963">Cytoplasm</keyword>
<keyword id="KW-0408">Iron</keyword>
<keyword id="KW-0479">Metal-binding</keyword>
<keyword id="KW-0808">Transferase</keyword>
<keyword id="KW-0819">tRNA processing</keyword>
<gene>
    <name evidence="1" type="primary">tsaD</name>
    <name type="synonym">gcp</name>
    <name type="ordered locus">ERGA_CDS_04140</name>
</gene>
<name>TSAD_EHRRG</name>
<reference key="1">
    <citation type="journal article" date="2006" name="J. Bacteriol.">
        <title>Comparative genomic analysis of three strains of Ehrlichia ruminantium reveals an active process of genome size plasticity.</title>
        <authorList>
            <person name="Frutos R."/>
            <person name="Viari A."/>
            <person name="Ferraz C."/>
            <person name="Morgat A."/>
            <person name="Eychenie S."/>
            <person name="Kandassamy Y."/>
            <person name="Chantal I."/>
            <person name="Bensaid A."/>
            <person name="Coissac E."/>
            <person name="Vachiery N."/>
            <person name="Demaille J."/>
            <person name="Martinez D."/>
        </authorList>
    </citation>
    <scope>NUCLEOTIDE SEQUENCE [LARGE SCALE GENOMIC DNA]</scope>
    <source>
        <strain>Gardel</strain>
    </source>
</reference>
<comment type="function">
    <text evidence="1">Required for the formation of a threonylcarbamoyl group on adenosine at position 37 (t(6)A37) in tRNAs that read codons beginning with adenine. Is involved in the transfer of the threonylcarbamoyl moiety of threonylcarbamoyl-AMP (TC-AMP) to the N6 group of A37, together with TsaE and TsaB. TsaD likely plays a direct catalytic role in this reaction.</text>
</comment>
<comment type="catalytic activity">
    <reaction evidence="1">
        <text>L-threonylcarbamoyladenylate + adenosine(37) in tRNA = N(6)-L-threonylcarbamoyladenosine(37) in tRNA + AMP + H(+)</text>
        <dbReference type="Rhea" id="RHEA:37059"/>
        <dbReference type="Rhea" id="RHEA-COMP:10162"/>
        <dbReference type="Rhea" id="RHEA-COMP:10163"/>
        <dbReference type="ChEBI" id="CHEBI:15378"/>
        <dbReference type="ChEBI" id="CHEBI:73682"/>
        <dbReference type="ChEBI" id="CHEBI:74411"/>
        <dbReference type="ChEBI" id="CHEBI:74418"/>
        <dbReference type="ChEBI" id="CHEBI:456215"/>
        <dbReference type="EC" id="2.3.1.234"/>
    </reaction>
</comment>
<comment type="cofactor">
    <cofactor evidence="1">
        <name>Fe(2+)</name>
        <dbReference type="ChEBI" id="CHEBI:29033"/>
    </cofactor>
    <text evidence="1">Binds 1 Fe(2+) ion per subunit.</text>
</comment>
<comment type="subcellular location">
    <subcellularLocation>
        <location evidence="1">Cytoplasm</location>
    </subcellularLocation>
</comment>
<comment type="similarity">
    <text evidence="1">Belongs to the KAE1 / TsaD family.</text>
</comment>
<protein>
    <recommendedName>
        <fullName evidence="1">tRNA N6-adenosine threonylcarbamoyltransferase</fullName>
        <ecNumber evidence="1">2.3.1.234</ecNumber>
    </recommendedName>
    <alternativeName>
        <fullName evidence="1">N6-L-threonylcarbamoyladenine synthase</fullName>
        <shortName evidence="1">t(6)A synthase</shortName>
    </alternativeName>
    <alternativeName>
        <fullName evidence="1">t(6)A37 threonylcarbamoyladenosine biosynthesis protein TsaD</fullName>
    </alternativeName>
    <alternativeName>
        <fullName evidence="1">tRNA threonylcarbamoyladenosine biosynthesis protein TsaD</fullName>
    </alternativeName>
</protein>
<feature type="chain" id="PRO_0000303354" description="tRNA N6-adenosine threonylcarbamoyltransferase">
    <location>
        <begin position="1"/>
        <end position="348"/>
    </location>
</feature>
<feature type="binding site" evidence="1">
    <location>
        <position position="116"/>
    </location>
    <ligand>
        <name>Fe cation</name>
        <dbReference type="ChEBI" id="CHEBI:24875"/>
    </ligand>
</feature>
<feature type="binding site" evidence="1">
    <location>
        <position position="120"/>
    </location>
    <ligand>
        <name>Fe cation</name>
        <dbReference type="ChEBI" id="CHEBI:24875"/>
    </ligand>
</feature>
<feature type="binding site" evidence="1">
    <location>
        <begin position="138"/>
        <end position="142"/>
    </location>
    <ligand>
        <name>substrate</name>
    </ligand>
</feature>
<feature type="binding site" evidence="1">
    <location>
        <position position="171"/>
    </location>
    <ligand>
        <name>substrate</name>
    </ligand>
</feature>
<feature type="binding site" evidence="1">
    <location>
        <position position="184"/>
    </location>
    <ligand>
        <name>substrate</name>
    </ligand>
</feature>
<feature type="binding site" evidence="1">
    <location>
        <position position="282"/>
    </location>
    <ligand>
        <name>substrate</name>
    </ligand>
</feature>
<feature type="binding site" evidence="1">
    <location>
        <position position="310"/>
    </location>
    <ligand>
        <name>Fe cation</name>
        <dbReference type="ChEBI" id="CHEBI:24875"/>
    </ligand>
</feature>
<dbReference type="EC" id="2.3.1.234" evidence="1"/>
<dbReference type="EMBL" id="CR925677">
    <property type="protein sequence ID" value="CAI27866.1"/>
    <property type="molecule type" value="Genomic_DNA"/>
</dbReference>
<dbReference type="RefSeq" id="WP_011255549.1">
    <property type="nucleotide sequence ID" value="NC_006831.1"/>
</dbReference>
<dbReference type="SMR" id="Q5FGU3"/>
<dbReference type="KEGG" id="erg:ERGA_CDS_04140"/>
<dbReference type="HOGENOM" id="CLU_023208_0_2_5"/>
<dbReference type="OrthoDB" id="9806197at2"/>
<dbReference type="Proteomes" id="UP000000533">
    <property type="component" value="Chromosome"/>
</dbReference>
<dbReference type="GO" id="GO:0005737">
    <property type="term" value="C:cytoplasm"/>
    <property type="evidence" value="ECO:0007669"/>
    <property type="project" value="UniProtKB-SubCell"/>
</dbReference>
<dbReference type="GO" id="GO:0005506">
    <property type="term" value="F:iron ion binding"/>
    <property type="evidence" value="ECO:0007669"/>
    <property type="project" value="UniProtKB-UniRule"/>
</dbReference>
<dbReference type="GO" id="GO:0061711">
    <property type="term" value="F:N(6)-L-threonylcarbamoyladenine synthase activity"/>
    <property type="evidence" value="ECO:0007669"/>
    <property type="project" value="UniProtKB-EC"/>
</dbReference>
<dbReference type="GO" id="GO:0002949">
    <property type="term" value="P:tRNA threonylcarbamoyladenosine modification"/>
    <property type="evidence" value="ECO:0007669"/>
    <property type="project" value="UniProtKB-UniRule"/>
</dbReference>
<dbReference type="CDD" id="cd24133">
    <property type="entry name" value="ASKHA_NBD_TsaD_bac"/>
    <property type="match status" value="1"/>
</dbReference>
<dbReference type="FunFam" id="3.30.420.40:FF:000012">
    <property type="entry name" value="tRNA N6-adenosine threonylcarbamoyltransferase"/>
    <property type="match status" value="1"/>
</dbReference>
<dbReference type="Gene3D" id="3.30.420.40">
    <property type="match status" value="2"/>
</dbReference>
<dbReference type="HAMAP" id="MF_01445">
    <property type="entry name" value="TsaD"/>
    <property type="match status" value="1"/>
</dbReference>
<dbReference type="InterPro" id="IPR043129">
    <property type="entry name" value="ATPase_NBD"/>
</dbReference>
<dbReference type="InterPro" id="IPR000905">
    <property type="entry name" value="Gcp-like_dom"/>
</dbReference>
<dbReference type="InterPro" id="IPR017861">
    <property type="entry name" value="KAE1/TsaD"/>
</dbReference>
<dbReference type="InterPro" id="IPR022450">
    <property type="entry name" value="TsaD"/>
</dbReference>
<dbReference type="NCBIfam" id="TIGR00329">
    <property type="entry name" value="gcp_kae1"/>
    <property type="match status" value="1"/>
</dbReference>
<dbReference type="NCBIfam" id="TIGR03723">
    <property type="entry name" value="T6A_TsaD_YgjD"/>
    <property type="match status" value="1"/>
</dbReference>
<dbReference type="PANTHER" id="PTHR11735">
    <property type="entry name" value="TRNA N6-ADENOSINE THREONYLCARBAMOYLTRANSFERASE"/>
    <property type="match status" value="1"/>
</dbReference>
<dbReference type="PANTHER" id="PTHR11735:SF6">
    <property type="entry name" value="TRNA N6-ADENOSINE THREONYLCARBAMOYLTRANSFERASE, MITOCHONDRIAL"/>
    <property type="match status" value="1"/>
</dbReference>
<dbReference type="Pfam" id="PF00814">
    <property type="entry name" value="TsaD"/>
    <property type="match status" value="1"/>
</dbReference>
<dbReference type="PRINTS" id="PR00789">
    <property type="entry name" value="OSIALOPTASE"/>
</dbReference>
<dbReference type="SUPFAM" id="SSF53067">
    <property type="entry name" value="Actin-like ATPase domain"/>
    <property type="match status" value="2"/>
</dbReference>